<protein>
    <recommendedName>
        <fullName evidence="1">UPF0346 protein BCAH187_A2410</fullName>
    </recommendedName>
</protein>
<organism>
    <name type="scientific">Bacillus cereus (strain AH187)</name>
    <dbReference type="NCBI Taxonomy" id="405534"/>
    <lineage>
        <taxon>Bacteria</taxon>
        <taxon>Bacillati</taxon>
        <taxon>Bacillota</taxon>
        <taxon>Bacilli</taxon>
        <taxon>Bacillales</taxon>
        <taxon>Bacillaceae</taxon>
        <taxon>Bacillus</taxon>
        <taxon>Bacillus cereus group</taxon>
    </lineage>
</organism>
<feature type="chain" id="PRO_1000146610" description="UPF0346 protein BCAH187_A2410">
    <location>
        <begin position="1"/>
        <end position="71"/>
    </location>
</feature>
<sequence>MKKTFYHYMMKHRAALFSNEISNLAEAMYDDLSFPKQSEDYDEISSYLELSGMLESMSIFDEAWDLYIQDR</sequence>
<accession>B7HQ94</accession>
<comment type="similarity">
    <text evidence="1">Belongs to the UPF0346 family.</text>
</comment>
<gene>
    <name type="ordered locus">BCAH187_A2410</name>
</gene>
<reference key="1">
    <citation type="submission" date="2008-10" db="EMBL/GenBank/DDBJ databases">
        <title>Genome sequence of Bacillus cereus AH187.</title>
        <authorList>
            <person name="Dodson R.J."/>
            <person name="Durkin A.S."/>
            <person name="Rosovitz M.J."/>
            <person name="Rasko D.A."/>
            <person name="Kolsto A.B."/>
            <person name="Okstad O.A."/>
            <person name="Ravel J."/>
            <person name="Sutton G."/>
        </authorList>
    </citation>
    <scope>NUCLEOTIDE SEQUENCE [LARGE SCALE GENOMIC DNA]</scope>
    <source>
        <strain>AH187</strain>
    </source>
</reference>
<name>Y2410_BACC7</name>
<evidence type="ECO:0000255" key="1">
    <source>
        <dbReference type="HAMAP-Rule" id="MF_01538"/>
    </source>
</evidence>
<dbReference type="EMBL" id="CP001177">
    <property type="protein sequence ID" value="ACJ78168.1"/>
    <property type="molecule type" value="Genomic_DNA"/>
</dbReference>
<dbReference type="SMR" id="B7HQ94"/>
<dbReference type="KEGG" id="bcr:BCAH187_A2410"/>
<dbReference type="HOGENOM" id="CLU_177534_0_0_9"/>
<dbReference type="Proteomes" id="UP000002214">
    <property type="component" value="Chromosome"/>
</dbReference>
<dbReference type="Gene3D" id="1.10.150.260">
    <property type="entry name" value="YozE SAM-like"/>
    <property type="match status" value="1"/>
</dbReference>
<dbReference type="HAMAP" id="MF_01538">
    <property type="entry name" value="UPF0346"/>
    <property type="match status" value="1"/>
</dbReference>
<dbReference type="InterPro" id="IPR010673">
    <property type="entry name" value="UPF0346"/>
</dbReference>
<dbReference type="InterPro" id="IPR023089">
    <property type="entry name" value="YozE_SAM-like"/>
</dbReference>
<dbReference type="InterPro" id="IPR036806">
    <property type="entry name" value="YozE_SAM-like_sf"/>
</dbReference>
<dbReference type="NCBIfam" id="NF010193">
    <property type="entry name" value="PRK13672.1"/>
    <property type="match status" value="1"/>
</dbReference>
<dbReference type="Pfam" id="PF06855">
    <property type="entry name" value="YozE_SAM_like"/>
    <property type="match status" value="1"/>
</dbReference>
<dbReference type="PIRSF" id="PIRSF037262">
    <property type="entry name" value="UCP037262"/>
    <property type="match status" value="1"/>
</dbReference>
<dbReference type="SUPFAM" id="SSF140652">
    <property type="entry name" value="YozE-like"/>
    <property type="match status" value="1"/>
</dbReference>
<proteinExistence type="inferred from homology"/>